<sequence length="597" mass="65718">MLRIAHRLDLQLRAAMDRAFPEQAAAARQASQPLDPQLAPASKPEFGDFQANGALALAKPLKQAPRQIATAIVAQLQADPAFTDLCLEPQIAGPGFINLTVRPERLAAEVSARLGDQRLGVPAVEQAAPVVVDFSSPNIAKEMHVGHLRSTIIGDSLARVLEFRGHPVLRLNHVGDWGTQFGMLITHLKQVAPDALDTADAVDLGDLVAFYREAKKRFDDDEAFQTTSREEVVKLQGGDPVSLKAWGLLCDQSRREFQKIYDRLDIRLNERGESFYNPFLPAVIDGLKDAELLVTDDGAQCVFLEGVQGKDGKPLPVIVQKSDGGFNYATTDLAAIRYRFGAAPDGDDARRVIYVTDAGQANHFAGVFQVAQRAGWIPEGARLEHVPFGLVQGEDGKKLKTRAGDTVRLRDLLDEAVERAETDLRSRLNEEERSESEEFIQHVAGTVGLAAVKYADLSQNRITNYQFSFDRMLALQGNTAPYLLYAVVRIAGIARKGGDLEVLTGQLQFSEPQEWALVRELLKFDAVIAEVEEELLPNRLCSYLFELSQVFNRFYDQVPVLKADAEALPSRLALCRLTADTLKSGLGLLGIPTLDRM</sequence>
<comment type="catalytic activity">
    <reaction evidence="1">
        <text>tRNA(Arg) + L-arginine + ATP = L-arginyl-tRNA(Arg) + AMP + diphosphate</text>
        <dbReference type="Rhea" id="RHEA:20301"/>
        <dbReference type="Rhea" id="RHEA-COMP:9658"/>
        <dbReference type="Rhea" id="RHEA-COMP:9673"/>
        <dbReference type="ChEBI" id="CHEBI:30616"/>
        <dbReference type="ChEBI" id="CHEBI:32682"/>
        <dbReference type="ChEBI" id="CHEBI:33019"/>
        <dbReference type="ChEBI" id="CHEBI:78442"/>
        <dbReference type="ChEBI" id="CHEBI:78513"/>
        <dbReference type="ChEBI" id="CHEBI:456215"/>
        <dbReference type="EC" id="6.1.1.19"/>
    </reaction>
</comment>
<comment type="subunit">
    <text evidence="1">Monomer.</text>
</comment>
<comment type="subcellular location">
    <subcellularLocation>
        <location evidence="1">Cytoplasm</location>
    </subcellularLocation>
</comment>
<comment type="similarity">
    <text evidence="1">Belongs to the class-I aminoacyl-tRNA synthetase family.</text>
</comment>
<keyword id="KW-0030">Aminoacyl-tRNA synthetase</keyword>
<keyword id="KW-0067">ATP-binding</keyword>
<keyword id="KW-0963">Cytoplasm</keyword>
<keyword id="KW-0436">Ligase</keyword>
<keyword id="KW-0547">Nucleotide-binding</keyword>
<keyword id="KW-0648">Protein biosynthesis</keyword>
<keyword id="KW-1185">Reference proteome</keyword>
<name>SYR_SYNPW</name>
<feature type="chain" id="PRO_1000018136" description="Arginine--tRNA ligase">
    <location>
        <begin position="1"/>
        <end position="597"/>
    </location>
</feature>
<feature type="region of interest" description="Disordered" evidence="2">
    <location>
        <begin position="23"/>
        <end position="43"/>
    </location>
</feature>
<feature type="short sequence motif" description="'HIGH' region">
    <location>
        <begin position="137"/>
        <end position="147"/>
    </location>
</feature>
<feature type="compositionally biased region" description="Low complexity" evidence="2">
    <location>
        <begin position="23"/>
        <end position="32"/>
    </location>
</feature>
<proteinExistence type="inferred from homology"/>
<reference key="1">
    <citation type="submission" date="2006-05" db="EMBL/GenBank/DDBJ databases">
        <authorList>
            <consortium name="Genoscope"/>
        </authorList>
    </citation>
    <scope>NUCLEOTIDE SEQUENCE [LARGE SCALE GENOMIC DNA]</scope>
    <source>
        <strain>WH7803</strain>
    </source>
</reference>
<evidence type="ECO:0000255" key="1">
    <source>
        <dbReference type="HAMAP-Rule" id="MF_00123"/>
    </source>
</evidence>
<evidence type="ECO:0000256" key="2">
    <source>
        <dbReference type="SAM" id="MobiDB-lite"/>
    </source>
</evidence>
<protein>
    <recommendedName>
        <fullName evidence="1">Arginine--tRNA ligase</fullName>
        <ecNumber evidence="1">6.1.1.19</ecNumber>
    </recommendedName>
    <alternativeName>
        <fullName evidence="1">Arginyl-tRNA synthetase</fullName>
        <shortName evidence="1">ArgRS</shortName>
    </alternativeName>
</protein>
<organism>
    <name type="scientific">Synechococcus sp. (strain WH7803)</name>
    <dbReference type="NCBI Taxonomy" id="32051"/>
    <lineage>
        <taxon>Bacteria</taxon>
        <taxon>Bacillati</taxon>
        <taxon>Cyanobacteriota</taxon>
        <taxon>Cyanophyceae</taxon>
        <taxon>Synechococcales</taxon>
        <taxon>Synechococcaceae</taxon>
        <taxon>Synechococcus</taxon>
    </lineage>
</organism>
<dbReference type="EC" id="6.1.1.19" evidence="1"/>
<dbReference type="EMBL" id="CT971583">
    <property type="protein sequence ID" value="CAK24762.1"/>
    <property type="molecule type" value="Genomic_DNA"/>
</dbReference>
<dbReference type="SMR" id="A5GP97"/>
<dbReference type="STRING" id="32051.SynWH7803_2336"/>
<dbReference type="KEGG" id="syx:SynWH7803_2336"/>
<dbReference type="eggNOG" id="COG0018">
    <property type="taxonomic scope" value="Bacteria"/>
</dbReference>
<dbReference type="HOGENOM" id="CLU_006406_5_1_3"/>
<dbReference type="OrthoDB" id="9805987at2"/>
<dbReference type="Proteomes" id="UP000001566">
    <property type="component" value="Chromosome"/>
</dbReference>
<dbReference type="GO" id="GO:0005737">
    <property type="term" value="C:cytoplasm"/>
    <property type="evidence" value="ECO:0007669"/>
    <property type="project" value="UniProtKB-SubCell"/>
</dbReference>
<dbReference type="GO" id="GO:0004814">
    <property type="term" value="F:arginine-tRNA ligase activity"/>
    <property type="evidence" value="ECO:0007669"/>
    <property type="project" value="UniProtKB-UniRule"/>
</dbReference>
<dbReference type="GO" id="GO:0005524">
    <property type="term" value="F:ATP binding"/>
    <property type="evidence" value="ECO:0007669"/>
    <property type="project" value="UniProtKB-UniRule"/>
</dbReference>
<dbReference type="GO" id="GO:0006420">
    <property type="term" value="P:arginyl-tRNA aminoacylation"/>
    <property type="evidence" value="ECO:0007669"/>
    <property type="project" value="UniProtKB-UniRule"/>
</dbReference>
<dbReference type="CDD" id="cd07956">
    <property type="entry name" value="Anticodon_Ia_Arg"/>
    <property type="match status" value="1"/>
</dbReference>
<dbReference type="CDD" id="cd00671">
    <property type="entry name" value="ArgRS_core"/>
    <property type="match status" value="1"/>
</dbReference>
<dbReference type="FunFam" id="3.40.50.620:FF:000030">
    <property type="entry name" value="Arginine--tRNA ligase"/>
    <property type="match status" value="1"/>
</dbReference>
<dbReference type="FunFam" id="1.10.730.10:FF:000006">
    <property type="entry name" value="Arginyl-tRNA synthetase 2, mitochondrial"/>
    <property type="match status" value="1"/>
</dbReference>
<dbReference type="Gene3D" id="3.30.1360.70">
    <property type="entry name" value="Arginyl tRNA synthetase N-terminal domain"/>
    <property type="match status" value="1"/>
</dbReference>
<dbReference type="Gene3D" id="3.40.50.620">
    <property type="entry name" value="HUPs"/>
    <property type="match status" value="1"/>
</dbReference>
<dbReference type="Gene3D" id="1.10.730.10">
    <property type="entry name" value="Isoleucyl-tRNA Synthetase, Domain 1"/>
    <property type="match status" value="1"/>
</dbReference>
<dbReference type="HAMAP" id="MF_00123">
    <property type="entry name" value="Arg_tRNA_synth"/>
    <property type="match status" value="1"/>
</dbReference>
<dbReference type="InterPro" id="IPR001412">
    <property type="entry name" value="aa-tRNA-synth_I_CS"/>
</dbReference>
<dbReference type="InterPro" id="IPR001278">
    <property type="entry name" value="Arg-tRNA-ligase"/>
</dbReference>
<dbReference type="InterPro" id="IPR005148">
    <property type="entry name" value="Arg-tRNA-synth_N"/>
</dbReference>
<dbReference type="InterPro" id="IPR036695">
    <property type="entry name" value="Arg-tRNA-synth_N_sf"/>
</dbReference>
<dbReference type="InterPro" id="IPR035684">
    <property type="entry name" value="ArgRS_core"/>
</dbReference>
<dbReference type="InterPro" id="IPR008909">
    <property type="entry name" value="DALR_anticod-bd"/>
</dbReference>
<dbReference type="InterPro" id="IPR014729">
    <property type="entry name" value="Rossmann-like_a/b/a_fold"/>
</dbReference>
<dbReference type="InterPro" id="IPR009080">
    <property type="entry name" value="tRNAsynth_Ia_anticodon-bd"/>
</dbReference>
<dbReference type="NCBIfam" id="TIGR00456">
    <property type="entry name" value="argS"/>
    <property type="match status" value="1"/>
</dbReference>
<dbReference type="PANTHER" id="PTHR11956:SF5">
    <property type="entry name" value="ARGININE--TRNA LIGASE, CYTOPLASMIC"/>
    <property type="match status" value="1"/>
</dbReference>
<dbReference type="PANTHER" id="PTHR11956">
    <property type="entry name" value="ARGINYL-TRNA SYNTHETASE"/>
    <property type="match status" value="1"/>
</dbReference>
<dbReference type="Pfam" id="PF03485">
    <property type="entry name" value="Arg_tRNA_synt_N"/>
    <property type="match status" value="1"/>
</dbReference>
<dbReference type="Pfam" id="PF05746">
    <property type="entry name" value="DALR_1"/>
    <property type="match status" value="1"/>
</dbReference>
<dbReference type="Pfam" id="PF00750">
    <property type="entry name" value="tRNA-synt_1d"/>
    <property type="match status" value="1"/>
</dbReference>
<dbReference type="PRINTS" id="PR01038">
    <property type="entry name" value="TRNASYNTHARG"/>
</dbReference>
<dbReference type="SMART" id="SM01016">
    <property type="entry name" value="Arg_tRNA_synt_N"/>
    <property type="match status" value="1"/>
</dbReference>
<dbReference type="SMART" id="SM00836">
    <property type="entry name" value="DALR_1"/>
    <property type="match status" value="1"/>
</dbReference>
<dbReference type="SUPFAM" id="SSF47323">
    <property type="entry name" value="Anticodon-binding domain of a subclass of class I aminoacyl-tRNA synthetases"/>
    <property type="match status" value="1"/>
</dbReference>
<dbReference type="SUPFAM" id="SSF55190">
    <property type="entry name" value="Arginyl-tRNA synthetase (ArgRS), N-terminal 'additional' domain"/>
    <property type="match status" value="1"/>
</dbReference>
<dbReference type="SUPFAM" id="SSF52374">
    <property type="entry name" value="Nucleotidylyl transferase"/>
    <property type="match status" value="1"/>
</dbReference>
<dbReference type="PROSITE" id="PS00178">
    <property type="entry name" value="AA_TRNA_LIGASE_I"/>
    <property type="match status" value="1"/>
</dbReference>
<gene>
    <name evidence="1" type="primary">argS</name>
    <name type="ordered locus">SynWH7803_2336</name>
</gene>
<accession>A5GP97</accession>